<sequence>MSQAELNGELFTLERFPPNAEEEALQAWEAADEYLLQQVNDVDGLTLIFNDGFGALACALAERNPVSINDSFISELATRHNLRMNGIDEESVRFQDSLSPLPAAPALVLIKVPKQLALLEQQLRALREVVTPETRIIAAAKARDVHNSTLALFEKILGTTTTSLAWKKARLIHCVFTAPKLADAPQTYSWKLDGTPWTIHNHANVFARSGLDIGARFFLQHLPSDLEGEIADLGCGNGVIGLQALAQNPNASVMFTDESHMAVASSRLNVERNLPDDIARCEFMVNNSLSGIEPDRFTAILCNPPFHQQHAITDHIAWQMFNDARRSLKYGGELYVVGNRHLDYFRKLKRAFGNCTTIATNNKFVILKATKVRKQR</sequence>
<reference key="1">
    <citation type="journal article" date="2008" name="PLoS Genet.">
        <title>Complete genome sequence of the N2-fixing broad host range endophyte Klebsiella pneumoniae 342 and virulence predictions verified in mice.</title>
        <authorList>
            <person name="Fouts D.E."/>
            <person name="Tyler H.L."/>
            <person name="DeBoy R.T."/>
            <person name="Daugherty S."/>
            <person name="Ren Q."/>
            <person name="Badger J.H."/>
            <person name="Durkin A.S."/>
            <person name="Huot H."/>
            <person name="Shrivastava S."/>
            <person name="Kothari S."/>
            <person name="Dodson R.J."/>
            <person name="Mohamoud Y."/>
            <person name="Khouri H."/>
            <person name="Roesch L.F.W."/>
            <person name="Krogfelt K.A."/>
            <person name="Struve C."/>
            <person name="Triplett E.W."/>
            <person name="Methe B.A."/>
        </authorList>
    </citation>
    <scope>NUCLEOTIDE SEQUENCE [LARGE SCALE GENOMIC DNA]</scope>
    <source>
        <strain>342</strain>
    </source>
</reference>
<protein>
    <recommendedName>
        <fullName evidence="1">Ribosomal RNA large subunit methyltransferase G</fullName>
        <ecNumber evidence="1">2.1.1.174</ecNumber>
    </recommendedName>
    <alternativeName>
        <fullName evidence="1">23S rRNA m2G1835 methyltransferase</fullName>
    </alternativeName>
    <alternativeName>
        <fullName evidence="1">rRNA (guanine-N(2)-)-methyltransferase RlmG</fullName>
    </alternativeName>
</protein>
<proteinExistence type="inferred from homology"/>
<accession>B5XTX7</accession>
<name>RLMG_KLEP3</name>
<evidence type="ECO:0000255" key="1">
    <source>
        <dbReference type="HAMAP-Rule" id="MF_01859"/>
    </source>
</evidence>
<keyword id="KW-0963">Cytoplasm</keyword>
<keyword id="KW-0489">Methyltransferase</keyword>
<keyword id="KW-0698">rRNA processing</keyword>
<keyword id="KW-0949">S-adenosyl-L-methionine</keyword>
<keyword id="KW-0808">Transferase</keyword>
<gene>
    <name evidence="1" type="primary">rlmG</name>
    <name type="ordered locus">KPK_0601</name>
</gene>
<feature type="chain" id="PRO_0000366466" description="Ribosomal RNA large subunit methyltransferase G">
    <location>
        <begin position="1"/>
        <end position="376"/>
    </location>
</feature>
<comment type="function">
    <text evidence="1">Specifically methylates the guanine in position 1835 (m2G1835) of 23S rRNA.</text>
</comment>
<comment type="catalytic activity">
    <reaction evidence="1">
        <text>guanosine(1835) in 23S rRNA + S-adenosyl-L-methionine = N(2)-methylguanosine(1835) in 23S rRNA + S-adenosyl-L-homocysteine + H(+)</text>
        <dbReference type="Rhea" id="RHEA:42744"/>
        <dbReference type="Rhea" id="RHEA-COMP:10217"/>
        <dbReference type="Rhea" id="RHEA-COMP:10218"/>
        <dbReference type="ChEBI" id="CHEBI:15378"/>
        <dbReference type="ChEBI" id="CHEBI:57856"/>
        <dbReference type="ChEBI" id="CHEBI:59789"/>
        <dbReference type="ChEBI" id="CHEBI:74269"/>
        <dbReference type="ChEBI" id="CHEBI:74481"/>
        <dbReference type="EC" id="2.1.1.174"/>
    </reaction>
</comment>
<comment type="subcellular location">
    <subcellularLocation>
        <location evidence="1">Cytoplasm</location>
    </subcellularLocation>
</comment>
<comment type="similarity">
    <text evidence="1">Belongs to the methyltransferase superfamily. RlmG family.</text>
</comment>
<dbReference type="EC" id="2.1.1.174" evidence="1"/>
<dbReference type="EMBL" id="CP000964">
    <property type="protein sequence ID" value="ACI11829.1"/>
    <property type="molecule type" value="Genomic_DNA"/>
</dbReference>
<dbReference type="SMR" id="B5XTX7"/>
<dbReference type="KEGG" id="kpe:KPK_0601"/>
<dbReference type="HOGENOM" id="CLU_040288_4_0_6"/>
<dbReference type="Proteomes" id="UP000001734">
    <property type="component" value="Chromosome"/>
</dbReference>
<dbReference type="GO" id="GO:0005737">
    <property type="term" value="C:cytoplasm"/>
    <property type="evidence" value="ECO:0007669"/>
    <property type="project" value="UniProtKB-SubCell"/>
</dbReference>
<dbReference type="GO" id="GO:0052916">
    <property type="term" value="F:23S rRNA (guanine(1835)-N(2))-methyltransferase activity"/>
    <property type="evidence" value="ECO:0007669"/>
    <property type="project" value="UniProtKB-EC"/>
</dbReference>
<dbReference type="GO" id="GO:0003676">
    <property type="term" value="F:nucleic acid binding"/>
    <property type="evidence" value="ECO:0007669"/>
    <property type="project" value="InterPro"/>
</dbReference>
<dbReference type="CDD" id="cd02440">
    <property type="entry name" value="AdoMet_MTases"/>
    <property type="match status" value="1"/>
</dbReference>
<dbReference type="FunFam" id="3.40.50.150:FF:000046">
    <property type="entry name" value="Ribosomal RNA large subunit methyltransferase G"/>
    <property type="match status" value="1"/>
</dbReference>
<dbReference type="Gene3D" id="3.40.50.150">
    <property type="entry name" value="Vaccinia Virus protein VP39"/>
    <property type="match status" value="2"/>
</dbReference>
<dbReference type="HAMAP" id="MF_01859">
    <property type="entry name" value="23SrRNA_methyltr_G"/>
    <property type="match status" value="1"/>
</dbReference>
<dbReference type="InterPro" id="IPR002052">
    <property type="entry name" value="DNA_methylase_N6_adenine_CS"/>
</dbReference>
<dbReference type="InterPro" id="IPR017237">
    <property type="entry name" value="rRNA_m2G-MeTrfase_RlmG"/>
</dbReference>
<dbReference type="InterPro" id="IPR046977">
    <property type="entry name" value="RsmC/RlmG"/>
</dbReference>
<dbReference type="InterPro" id="IPR029063">
    <property type="entry name" value="SAM-dependent_MTases_sf"/>
</dbReference>
<dbReference type="InterPro" id="IPR007848">
    <property type="entry name" value="Small_mtfrase_dom"/>
</dbReference>
<dbReference type="NCBIfam" id="NF011577">
    <property type="entry name" value="PRK15001.1"/>
    <property type="match status" value="1"/>
</dbReference>
<dbReference type="PANTHER" id="PTHR47816:SF5">
    <property type="entry name" value="RIBOSOMAL RNA LARGE SUBUNIT METHYLTRANSFERASE G"/>
    <property type="match status" value="1"/>
</dbReference>
<dbReference type="PANTHER" id="PTHR47816">
    <property type="entry name" value="RIBOSOMAL RNA SMALL SUBUNIT METHYLTRANSFERASE C"/>
    <property type="match status" value="1"/>
</dbReference>
<dbReference type="Pfam" id="PF05175">
    <property type="entry name" value="MTS"/>
    <property type="match status" value="1"/>
</dbReference>
<dbReference type="PIRSF" id="PIRSF037565">
    <property type="entry name" value="RRNA_m2G_Mtase_RsmD_prd"/>
    <property type="match status" value="1"/>
</dbReference>
<dbReference type="SUPFAM" id="SSF53335">
    <property type="entry name" value="S-adenosyl-L-methionine-dependent methyltransferases"/>
    <property type="match status" value="1"/>
</dbReference>
<organism>
    <name type="scientific">Klebsiella pneumoniae (strain 342)</name>
    <dbReference type="NCBI Taxonomy" id="507522"/>
    <lineage>
        <taxon>Bacteria</taxon>
        <taxon>Pseudomonadati</taxon>
        <taxon>Pseudomonadota</taxon>
        <taxon>Gammaproteobacteria</taxon>
        <taxon>Enterobacterales</taxon>
        <taxon>Enterobacteriaceae</taxon>
        <taxon>Klebsiella/Raoultella group</taxon>
        <taxon>Klebsiella</taxon>
        <taxon>Klebsiella pneumoniae complex</taxon>
    </lineage>
</organism>